<feature type="chain" id="PRO_0000206801" description="Chromosome partition protein MukE">
    <location>
        <begin position="1"/>
        <end position="225"/>
    </location>
</feature>
<feature type="region of interest" description="Disordered" evidence="2">
    <location>
        <begin position="197"/>
        <end position="225"/>
    </location>
</feature>
<feature type="compositionally biased region" description="Acidic residues" evidence="2">
    <location>
        <begin position="212"/>
        <end position="225"/>
    </location>
</feature>
<organism>
    <name type="scientific">Salmonella typhi</name>
    <dbReference type="NCBI Taxonomy" id="90370"/>
    <lineage>
        <taxon>Bacteria</taxon>
        <taxon>Pseudomonadati</taxon>
        <taxon>Pseudomonadota</taxon>
        <taxon>Gammaproteobacteria</taxon>
        <taxon>Enterobacterales</taxon>
        <taxon>Enterobacteriaceae</taxon>
        <taxon>Salmonella</taxon>
    </lineage>
</organism>
<comment type="function">
    <text evidence="1">Involved in chromosome condensation, segregation and cell cycle progression. May participate in facilitating chromosome segregation by condensation DNA from both sides of a centrally located replisome during cell division. Probably acts via its interaction with MukB and MukF.</text>
</comment>
<comment type="subunit">
    <text evidence="1">Interacts, and probably forms a ternary complex, with MukF and MukB. The complex formation is stimulated by calcium or magnesium.</text>
</comment>
<comment type="subcellular location">
    <subcellularLocation>
        <location evidence="1">Cytoplasm</location>
        <location evidence="1">Nucleoid</location>
    </subcellularLocation>
    <text evidence="1">Restricted to the nucleoid region.</text>
</comment>
<comment type="similarity">
    <text evidence="1">Belongs to the MukE family.</text>
</comment>
<evidence type="ECO:0000255" key="1">
    <source>
        <dbReference type="HAMAP-Rule" id="MF_01802"/>
    </source>
</evidence>
<evidence type="ECO:0000256" key="2">
    <source>
        <dbReference type="SAM" id="MobiDB-lite"/>
    </source>
</evidence>
<protein>
    <recommendedName>
        <fullName evidence="1">Chromosome partition protein MukE</fullName>
    </recommendedName>
</protein>
<reference key="1">
    <citation type="journal article" date="2001" name="Nature">
        <title>Complete genome sequence of a multiple drug resistant Salmonella enterica serovar Typhi CT18.</title>
        <authorList>
            <person name="Parkhill J."/>
            <person name="Dougan G."/>
            <person name="James K.D."/>
            <person name="Thomson N.R."/>
            <person name="Pickard D."/>
            <person name="Wain J."/>
            <person name="Churcher C.M."/>
            <person name="Mungall K.L."/>
            <person name="Bentley S.D."/>
            <person name="Holden M.T.G."/>
            <person name="Sebaihia M."/>
            <person name="Baker S."/>
            <person name="Basham D."/>
            <person name="Brooks K."/>
            <person name="Chillingworth T."/>
            <person name="Connerton P."/>
            <person name="Cronin A."/>
            <person name="Davis P."/>
            <person name="Davies R.M."/>
            <person name="Dowd L."/>
            <person name="White N."/>
            <person name="Farrar J."/>
            <person name="Feltwell T."/>
            <person name="Hamlin N."/>
            <person name="Haque A."/>
            <person name="Hien T.T."/>
            <person name="Holroyd S."/>
            <person name="Jagels K."/>
            <person name="Krogh A."/>
            <person name="Larsen T.S."/>
            <person name="Leather S."/>
            <person name="Moule S."/>
            <person name="O'Gaora P."/>
            <person name="Parry C."/>
            <person name="Quail M.A."/>
            <person name="Rutherford K.M."/>
            <person name="Simmonds M."/>
            <person name="Skelton J."/>
            <person name="Stevens K."/>
            <person name="Whitehead S."/>
            <person name="Barrell B.G."/>
        </authorList>
    </citation>
    <scope>NUCLEOTIDE SEQUENCE [LARGE SCALE GENOMIC DNA]</scope>
    <source>
        <strain>CT18</strain>
    </source>
</reference>
<reference key="2">
    <citation type="journal article" date="2003" name="J. Bacteriol.">
        <title>Comparative genomics of Salmonella enterica serovar Typhi strains Ty2 and CT18.</title>
        <authorList>
            <person name="Deng W."/>
            <person name="Liou S.-R."/>
            <person name="Plunkett G. III"/>
            <person name="Mayhew G.F."/>
            <person name="Rose D.J."/>
            <person name="Burland V."/>
            <person name="Kodoyianni V."/>
            <person name="Schwartz D.C."/>
            <person name="Blattner F.R."/>
        </authorList>
    </citation>
    <scope>NUCLEOTIDE SEQUENCE [LARGE SCALE GENOMIC DNA]</scope>
    <source>
        <strain>ATCC 700931 / Ty2</strain>
    </source>
</reference>
<keyword id="KW-0131">Cell cycle</keyword>
<keyword id="KW-0132">Cell division</keyword>
<keyword id="KW-0159">Chromosome partition</keyword>
<keyword id="KW-0963">Cytoplasm</keyword>
<keyword id="KW-0226">DNA condensation</keyword>
<dbReference type="EMBL" id="AL513382">
    <property type="protein sequence ID" value="CAD05393.1"/>
    <property type="molecule type" value="Genomic_DNA"/>
</dbReference>
<dbReference type="EMBL" id="AE014613">
    <property type="protein sequence ID" value="AAO69556.1"/>
    <property type="molecule type" value="Genomic_DNA"/>
</dbReference>
<dbReference type="RefSeq" id="NP_455479.1">
    <property type="nucleotide sequence ID" value="NC_003198.1"/>
</dbReference>
<dbReference type="SMR" id="Q8Z7Z6"/>
<dbReference type="STRING" id="220341.gene:17584984"/>
<dbReference type="KEGG" id="stt:t1941"/>
<dbReference type="KEGG" id="sty:STY0995"/>
<dbReference type="PATRIC" id="fig|220341.7.peg.1003"/>
<dbReference type="eggNOG" id="COG3095">
    <property type="taxonomic scope" value="Bacteria"/>
</dbReference>
<dbReference type="HOGENOM" id="CLU_1146408_0_0_6"/>
<dbReference type="OMA" id="FLMDYQE"/>
<dbReference type="Proteomes" id="UP000000541">
    <property type="component" value="Chromosome"/>
</dbReference>
<dbReference type="Proteomes" id="UP000002670">
    <property type="component" value="Chromosome"/>
</dbReference>
<dbReference type="GO" id="GO:0005737">
    <property type="term" value="C:cytoplasm"/>
    <property type="evidence" value="ECO:0007669"/>
    <property type="project" value="UniProtKB-UniRule"/>
</dbReference>
<dbReference type="GO" id="GO:0009295">
    <property type="term" value="C:nucleoid"/>
    <property type="evidence" value="ECO:0007669"/>
    <property type="project" value="UniProtKB-SubCell"/>
</dbReference>
<dbReference type="GO" id="GO:0051301">
    <property type="term" value="P:cell division"/>
    <property type="evidence" value="ECO:0007669"/>
    <property type="project" value="UniProtKB-KW"/>
</dbReference>
<dbReference type="GO" id="GO:0030261">
    <property type="term" value="P:chromosome condensation"/>
    <property type="evidence" value="ECO:0007669"/>
    <property type="project" value="UniProtKB-KW"/>
</dbReference>
<dbReference type="GO" id="GO:0007059">
    <property type="term" value="P:chromosome segregation"/>
    <property type="evidence" value="ECO:0007669"/>
    <property type="project" value="UniProtKB-UniRule"/>
</dbReference>
<dbReference type="GO" id="GO:0006260">
    <property type="term" value="P:DNA replication"/>
    <property type="evidence" value="ECO:0007669"/>
    <property type="project" value="UniProtKB-UniRule"/>
</dbReference>
<dbReference type="CDD" id="cd16336">
    <property type="entry name" value="MukE"/>
    <property type="match status" value="1"/>
</dbReference>
<dbReference type="Gene3D" id="1.10.10.2250">
    <property type="match status" value="1"/>
</dbReference>
<dbReference type="Gene3D" id="1.10.10.2260">
    <property type="entry name" value="MukE-like family, C-terminal domain"/>
    <property type="match status" value="1"/>
</dbReference>
<dbReference type="HAMAP" id="MF_01802">
    <property type="entry name" value="MukE"/>
    <property type="match status" value="1"/>
</dbReference>
<dbReference type="InterPro" id="IPR042037">
    <property type="entry name" value="MukE_C"/>
</dbReference>
<dbReference type="InterPro" id="IPR042038">
    <property type="entry name" value="MukE_N"/>
</dbReference>
<dbReference type="InterPro" id="IPR007385">
    <property type="entry name" value="Scp_MukE"/>
</dbReference>
<dbReference type="NCBIfam" id="NF003602">
    <property type="entry name" value="PRK05256.1"/>
    <property type="match status" value="1"/>
</dbReference>
<dbReference type="Pfam" id="PF04288">
    <property type="entry name" value="MukE"/>
    <property type="match status" value="1"/>
</dbReference>
<sequence length="225" mass="25957">MPVKLAQALANPLFPALDSALRSGRHIGLDELDNHAFLMDFQEYLEEFYARYNVELIRAPEGFFYLRPRSTTLIPRSVLSELDMMVGKILCYLYLSPERLANEGIFTQQELYDELLTLADEAKLLKLVNNRSTGSDVDRQKLQEKVRSSLNRLRRLGMVWFMGHDSSKFRITESVFRFGADVRAGDDPREAQRRLIRDGEAMPIENHLQLNDETEESQPDSGEEE</sequence>
<gene>
    <name evidence="1" type="primary">mukE</name>
    <name type="ordered locus">STY0995</name>
    <name type="ordered locus">t1941</name>
</gene>
<name>MUKE_SALTI</name>
<accession>Q8Z7Z6</accession>
<proteinExistence type="inferred from homology"/>